<comment type="subcellular location">
    <subcellularLocation>
        <location evidence="1">Cytoplasm</location>
    </subcellularLocation>
</comment>
<comment type="similarity">
    <text evidence="1">Belongs to the TACO1 family.</text>
</comment>
<proteinExistence type="inferred from homology"/>
<reference key="1">
    <citation type="journal article" date="2009" name="J. Bacteriol.">
        <title>The genome of Burkholderia cenocepacia J2315, an epidemic pathogen of cystic fibrosis patients.</title>
        <authorList>
            <person name="Holden M.T."/>
            <person name="Seth-Smith H.M."/>
            <person name="Crossman L.C."/>
            <person name="Sebaihia M."/>
            <person name="Bentley S.D."/>
            <person name="Cerdeno-Tarraga A.M."/>
            <person name="Thomson N.R."/>
            <person name="Bason N."/>
            <person name="Quail M.A."/>
            <person name="Sharp S."/>
            <person name="Cherevach I."/>
            <person name="Churcher C."/>
            <person name="Goodhead I."/>
            <person name="Hauser H."/>
            <person name="Holroyd N."/>
            <person name="Mungall K."/>
            <person name="Scott P."/>
            <person name="Walker D."/>
            <person name="White B."/>
            <person name="Rose H."/>
            <person name="Iversen P."/>
            <person name="Mil-Homens D."/>
            <person name="Rocha E.P."/>
            <person name="Fialho A.M."/>
            <person name="Baldwin A."/>
            <person name="Dowson C."/>
            <person name="Barrell B.G."/>
            <person name="Govan J.R."/>
            <person name="Vandamme P."/>
            <person name="Hart C.A."/>
            <person name="Mahenthiralingam E."/>
            <person name="Parkhill J."/>
        </authorList>
    </citation>
    <scope>NUCLEOTIDE SEQUENCE [LARGE SCALE GENOMIC DNA]</scope>
    <source>
        <strain>ATCC BAA-245 / DSM 16553 / LMG 16656 / NCTC 13227 / J2315 / CF5610</strain>
    </source>
</reference>
<sequence length="242" mass="26009">MAGHSKWANIKHKKAAADAKRGKIWTRLIKEIQVAARLGGGDVNSNPRLRLAVDKAADANMPKDNVKRAIDRGVGGADGANYEEIRYEGYGISGAAIIVDTLTDNRTRTVAEVRHAFSKFGGNMGTDGSVAFMFDHVGQFLFAPGTSEDALMEAALEAGANDVNTNDDGSIEVLCDWQAFSAVKDALEAAGFKAELAEVTMKPQNEVEFTGDDAAKMQKLLDALENLDDVQDVYTNAVIVEE</sequence>
<protein>
    <recommendedName>
        <fullName evidence="1">Probable transcriptional regulatory protein BceJ2315_23480</fullName>
    </recommendedName>
</protein>
<gene>
    <name type="ordered locus">BceJ2315_23480</name>
    <name type="ORF">BCAL2388</name>
</gene>
<organism>
    <name type="scientific">Burkholderia cenocepacia (strain ATCC BAA-245 / DSM 16553 / LMG 16656 / NCTC 13227 / J2315 / CF5610)</name>
    <name type="common">Burkholderia cepacia (strain J2315)</name>
    <dbReference type="NCBI Taxonomy" id="216591"/>
    <lineage>
        <taxon>Bacteria</taxon>
        <taxon>Pseudomonadati</taxon>
        <taxon>Pseudomonadota</taxon>
        <taxon>Betaproteobacteria</taxon>
        <taxon>Burkholderiales</taxon>
        <taxon>Burkholderiaceae</taxon>
        <taxon>Burkholderia</taxon>
        <taxon>Burkholderia cepacia complex</taxon>
    </lineage>
</organism>
<name>Y2348_BURCJ</name>
<accession>B4E5R6</accession>
<feature type="chain" id="PRO_1000132164" description="Probable transcriptional regulatory protein BceJ2315_23480">
    <location>
        <begin position="1"/>
        <end position="242"/>
    </location>
</feature>
<dbReference type="EMBL" id="AM747720">
    <property type="protein sequence ID" value="CAR52689.1"/>
    <property type="molecule type" value="Genomic_DNA"/>
</dbReference>
<dbReference type="RefSeq" id="WP_006478227.1">
    <property type="nucleotide sequence ID" value="NC_011000.1"/>
</dbReference>
<dbReference type="SMR" id="B4E5R6"/>
<dbReference type="KEGG" id="bcj:BCAL2388"/>
<dbReference type="eggNOG" id="COG0217">
    <property type="taxonomic scope" value="Bacteria"/>
</dbReference>
<dbReference type="HOGENOM" id="CLU_062974_2_2_4"/>
<dbReference type="BioCyc" id="BCEN216591:G1G1V-2635-MONOMER"/>
<dbReference type="Proteomes" id="UP000001035">
    <property type="component" value="Chromosome 1"/>
</dbReference>
<dbReference type="GO" id="GO:0005829">
    <property type="term" value="C:cytosol"/>
    <property type="evidence" value="ECO:0007669"/>
    <property type="project" value="TreeGrafter"/>
</dbReference>
<dbReference type="GO" id="GO:0003677">
    <property type="term" value="F:DNA binding"/>
    <property type="evidence" value="ECO:0007669"/>
    <property type="project" value="UniProtKB-UniRule"/>
</dbReference>
<dbReference type="GO" id="GO:0006355">
    <property type="term" value="P:regulation of DNA-templated transcription"/>
    <property type="evidence" value="ECO:0007669"/>
    <property type="project" value="UniProtKB-UniRule"/>
</dbReference>
<dbReference type="FunFam" id="1.10.10.200:FF:000001">
    <property type="entry name" value="Probable transcriptional regulatory protein YebC"/>
    <property type="match status" value="1"/>
</dbReference>
<dbReference type="FunFam" id="3.30.70.980:FF:000002">
    <property type="entry name" value="Probable transcriptional regulatory protein YebC"/>
    <property type="match status" value="1"/>
</dbReference>
<dbReference type="Gene3D" id="1.10.10.200">
    <property type="match status" value="1"/>
</dbReference>
<dbReference type="Gene3D" id="3.30.70.980">
    <property type="match status" value="2"/>
</dbReference>
<dbReference type="HAMAP" id="MF_00693">
    <property type="entry name" value="Transcrip_reg_TACO1"/>
    <property type="match status" value="1"/>
</dbReference>
<dbReference type="InterPro" id="IPR017856">
    <property type="entry name" value="Integrase-like_N"/>
</dbReference>
<dbReference type="InterPro" id="IPR048300">
    <property type="entry name" value="TACO1_YebC-like_2nd/3rd_dom"/>
</dbReference>
<dbReference type="InterPro" id="IPR049083">
    <property type="entry name" value="TACO1_YebC_N"/>
</dbReference>
<dbReference type="InterPro" id="IPR002876">
    <property type="entry name" value="Transcrip_reg_TACO1-like"/>
</dbReference>
<dbReference type="InterPro" id="IPR026564">
    <property type="entry name" value="Transcrip_reg_TACO1-like_dom3"/>
</dbReference>
<dbReference type="InterPro" id="IPR029072">
    <property type="entry name" value="YebC-like"/>
</dbReference>
<dbReference type="NCBIfam" id="NF001030">
    <property type="entry name" value="PRK00110.1"/>
    <property type="match status" value="1"/>
</dbReference>
<dbReference type="NCBIfam" id="NF009044">
    <property type="entry name" value="PRK12378.1"/>
    <property type="match status" value="1"/>
</dbReference>
<dbReference type="NCBIfam" id="TIGR01033">
    <property type="entry name" value="YebC/PmpR family DNA-binding transcriptional regulator"/>
    <property type="match status" value="1"/>
</dbReference>
<dbReference type="PANTHER" id="PTHR12532:SF6">
    <property type="entry name" value="TRANSCRIPTIONAL REGULATORY PROTEIN YEBC-RELATED"/>
    <property type="match status" value="1"/>
</dbReference>
<dbReference type="PANTHER" id="PTHR12532">
    <property type="entry name" value="TRANSLATIONAL ACTIVATOR OF CYTOCHROME C OXIDASE 1"/>
    <property type="match status" value="1"/>
</dbReference>
<dbReference type="Pfam" id="PF20772">
    <property type="entry name" value="TACO1_YebC_N"/>
    <property type="match status" value="1"/>
</dbReference>
<dbReference type="Pfam" id="PF01709">
    <property type="entry name" value="Transcrip_reg"/>
    <property type="match status" value="1"/>
</dbReference>
<dbReference type="SUPFAM" id="SSF75625">
    <property type="entry name" value="YebC-like"/>
    <property type="match status" value="1"/>
</dbReference>
<evidence type="ECO:0000255" key="1">
    <source>
        <dbReference type="HAMAP-Rule" id="MF_00693"/>
    </source>
</evidence>
<keyword id="KW-0963">Cytoplasm</keyword>
<keyword id="KW-0238">DNA-binding</keyword>
<keyword id="KW-0804">Transcription</keyword>
<keyword id="KW-0805">Transcription regulation</keyword>